<feature type="chain" id="PRO_0000161056" description="Probable histidine ammonia-lyase">
    <location>
        <begin position="1"/>
        <end position="496"/>
    </location>
</feature>
<feature type="modified residue" description="2,3-didehydroalanine (Ser)" evidence="1">
    <location>
        <position position="142"/>
    </location>
</feature>
<feature type="cross-link" description="5-imidazolinone (Ala-Gly)" evidence="1">
    <location>
        <begin position="141"/>
        <end position="143"/>
    </location>
</feature>
<feature type="strand" evidence="2">
    <location>
        <begin position="1"/>
        <end position="3"/>
    </location>
</feature>
<feature type="helix" evidence="2">
    <location>
        <begin position="11"/>
        <end position="18"/>
    </location>
</feature>
<feature type="strand" evidence="2">
    <location>
        <begin position="23"/>
        <end position="25"/>
    </location>
</feature>
<feature type="helix" evidence="2">
    <location>
        <begin position="28"/>
        <end position="49"/>
    </location>
</feature>
<feature type="helix" evidence="2">
    <location>
        <begin position="64"/>
        <end position="82"/>
    </location>
</feature>
<feature type="strand" evidence="2">
    <location>
        <begin position="86"/>
        <end position="89"/>
    </location>
</feature>
<feature type="helix" evidence="2">
    <location>
        <begin position="92"/>
        <end position="106"/>
    </location>
</feature>
<feature type="strand" evidence="2">
    <location>
        <begin position="108"/>
        <end position="111"/>
    </location>
</feature>
<feature type="helix" evidence="2">
    <location>
        <begin position="115"/>
        <end position="127"/>
    </location>
</feature>
<feature type="strand" evidence="2">
    <location>
        <begin position="129"/>
        <end position="131"/>
    </location>
</feature>
<feature type="strand" evidence="2">
    <location>
        <begin position="134"/>
        <end position="136"/>
    </location>
</feature>
<feature type="helix" evidence="2">
    <location>
        <begin position="145"/>
        <end position="155"/>
    </location>
</feature>
<feature type="strand" evidence="2">
    <location>
        <begin position="159"/>
        <end position="163"/>
    </location>
</feature>
<feature type="strand" evidence="2">
    <location>
        <begin position="166"/>
        <end position="169"/>
    </location>
</feature>
<feature type="helix" evidence="2">
    <location>
        <begin position="170"/>
        <end position="176"/>
    </location>
</feature>
<feature type="helix" evidence="2">
    <location>
        <begin position="188"/>
        <end position="193"/>
    </location>
</feature>
<feature type="strand" evidence="2">
    <location>
        <begin position="194"/>
        <end position="196"/>
    </location>
</feature>
<feature type="helix" evidence="2">
    <location>
        <begin position="197"/>
        <end position="227"/>
    </location>
</feature>
<feature type="helix" evidence="2">
    <location>
        <begin position="232"/>
        <end position="235"/>
    </location>
</feature>
<feature type="helix" evidence="2">
    <location>
        <begin position="237"/>
        <end position="241"/>
    </location>
</feature>
<feature type="helix" evidence="2">
    <location>
        <begin position="246"/>
        <end position="259"/>
    </location>
</feature>
<feature type="helix" evidence="2">
    <location>
        <begin position="263"/>
        <end position="271"/>
    </location>
</feature>
<feature type="helix" evidence="2">
    <location>
        <begin position="277"/>
        <end position="280"/>
    </location>
</feature>
<feature type="helix" evidence="2">
    <location>
        <begin position="282"/>
        <end position="303"/>
    </location>
</feature>
<feature type="strand" evidence="2">
    <location>
        <begin position="309"/>
        <end position="313"/>
    </location>
</feature>
<feature type="helix" evidence="2">
    <location>
        <begin position="327"/>
        <end position="354"/>
    </location>
</feature>
<feature type="helix" evidence="2">
    <location>
        <begin position="357"/>
        <end position="360"/>
    </location>
</feature>
<feature type="helix" evidence="2">
    <location>
        <begin position="364"/>
        <end position="366"/>
    </location>
</feature>
<feature type="turn" evidence="2">
    <location>
        <begin position="370"/>
        <end position="372"/>
    </location>
</feature>
<feature type="helix" evidence="2">
    <location>
        <begin position="377"/>
        <end position="393"/>
    </location>
</feature>
<feature type="helix" evidence="2">
    <location>
        <begin position="397"/>
        <end position="399"/>
    </location>
</feature>
<feature type="turn" evidence="2">
    <location>
        <begin position="405"/>
        <end position="408"/>
    </location>
</feature>
<feature type="helix" evidence="2">
    <location>
        <begin position="415"/>
        <end position="444"/>
    </location>
</feature>
<feature type="helix" evidence="2">
    <location>
        <begin position="453"/>
        <end position="465"/>
    </location>
</feature>
<feature type="helix" evidence="2">
    <location>
        <begin position="475"/>
        <end position="487"/>
    </location>
</feature>
<feature type="helix" evidence="2">
    <location>
        <begin position="490"/>
        <end position="494"/>
    </location>
</feature>
<evidence type="ECO:0000255" key="1">
    <source>
        <dbReference type="HAMAP-Rule" id="MF_00229"/>
    </source>
</evidence>
<evidence type="ECO:0007829" key="2">
    <source>
        <dbReference type="PDB" id="7TQR"/>
    </source>
</evidence>
<gene>
    <name evidence="1" type="primary">hutH</name>
    <name type="ordered locus">Ta0242</name>
</gene>
<sequence>MIEIDGRSLRVEDVYAVAVEYDRVSISDDTLKAVEEKHEAFLKLINSGKTVYGVNTGFGSLLNVHIERDQEIELQKNLIRSHSSGVGDYLENRYVRAIMAVRLNSLAAGYSAVSADLLNMMVEMLNRDVIPAVPKYGSVGASGDLAPLAHIGLAMMGEGKAFFEGRLMDSARALEKAGLKPYQFKEKEGVALINGTSFMSGILSIAVMDAHDILENAIRSALLSFEALGGTSKAFTPWILGARPHLGQVAIGNRFREYLTGSDIVKRADSVKVQDAYTLRCIPQVYGSVADVIDYVENVLSVEINSATDNPLFNGEEVVSGGNFHGEPVALAADFLAIALTDLGNMVERRIARLVDTNLSGLPPFLTPDSGLNSGYMIPQYTAAALCNRNKVLAYPSSADTIPTSANQEDHVSMGATGSLKLLEIIDNVRYIIAIEYLLGSQALEFTDKGMSPSTRKIYEKIREKVEKLDHDRPPSFDIETIRKMMDKKEFISALP</sequence>
<reference key="1">
    <citation type="journal article" date="2000" name="Nature">
        <title>The genome sequence of the thermoacidophilic scavenger Thermoplasma acidophilum.</title>
        <authorList>
            <person name="Ruepp A."/>
            <person name="Graml W."/>
            <person name="Santos-Martinez M.-L."/>
            <person name="Koretke K.K."/>
            <person name="Volker C."/>
            <person name="Mewes H.-W."/>
            <person name="Frishman D."/>
            <person name="Stocker S."/>
            <person name="Lupas A.N."/>
            <person name="Baumeister W."/>
        </authorList>
    </citation>
    <scope>NUCLEOTIDE SEQUENCE [LARGE SCALE GENOMIC DNA]</scope>
    <source>
        <strain>ATCC 25905 / DSM 1728 / JCM 9062 / NBRC 15155 / AMRC-C165</strain>
    </source>
</reference>
<protein>
    <recommendedName>
        <fullName evidence="1">Probable histidine ammonia-lyase</fullName>
        <shortName evidence="1">Histidase</shortName>
        <ecNumber evidence="1">4.3.1.3</ecNumber>
    </recommendedName>
</protein>
<name>HUTH_THEAC</name>
<accession>Q9HLI6</accession>
<comment type="catalytic activity">
    <reaction evidence="1">
        <text>L-histidine = trans-urocanate + NH4(+)</text>
        <dbReference type="Rhea" id="RHEA:21232"/>
        <dbReference type="ChEBI" id="CHEBI:17771"/>
        <dbReference type="ChEBI" id="CHEBI:28938"/>
        <dbReference type="ChEBI" id="CHEBI:57595"/>
        <dbReference type="EC" id="4.3.1.3"/>
    </reaction>
</comment>
<comment type="pathway">
    <text evidence="1">Amino-acid degradation; L-histidine degradation into L-glutamate; N-formimidoyl-L-glutamate from L-histidine: step 1/3.</text>
</comment>
<comment type="subcellular location">
    <subcellularLocation>
        <location evidence="1">Cytoplasm</location>
    </subcellularLocation>
</comment>
<comment type="PTM">
    <text evidence="1">Contains an active site 4-methylidene-imidazol-5-one (MIO), which is formed autocatalytically by cyclization and dehydration of residues Ala-Ser-Gly.</text>
</comment>
<comment type="similarity">
    <text evidence="1">Belongs to the PAL/histidase family.</text>
</comment>
<keyword id="KW-0002">3D-structure</keyword>
<keyword id="KW-0963">Cytoplasm</keyword>
<keyword id="KW-0369">Histidine metabolism</keyword>
<keyword id="KW-0456">Lyase</keyword>
<keyword id="KW-1185">Reference proteome</keyword>
<organism>
    <name type="scientific">Thermoplasma acidophilum (strain ATCC 25905 / DSM 1728 / JCM 9062 / NBRC 15155 / AMRC-C165)</name>
    <dbReference type="NCBI Taxonomy" id="273075"/>
    <lineage>
        <taxon>Archaea</taxon>
        <taxon>Methanobacteriati</taxon>
        <taxon>Thermoplasmatota</taxon>
        <taxon>Thermoplasmata</taxon>
        <taxon>Thermoplasmatales</taxon>
        <taxon>Thermoplasmataceae</taxon>
        <taxon>Thermoplasma</taxon>
    </lineage>
</organism>
<proteinExistence type="evidence at protein level"/>
<dbReference type="EC" id="4.3.1.3" evidence="1"/>
<dbReference type="EMBL" id="AL445063">
    <property type="protein sequence ID" value="CAC11387.1"/>
    <property type="molecule type" value="Genomic_DNA"/>
</dbReference>
<dbReference type="RefSeq" id="WP_010900671.1">
    <property type="nucleotide sequence ID" value="NC_002578.1"/>
</dbReference>
<dbReference type="PDB" id="7TQR">
    <property type="method" value="X-ray"/>
    <property type="resolution" value="2.10 A"/>
    <property type="chains" value="A=1-496"/>
</dbReference>
<dbReference type="PDBsum" id="7TQR"/>
<dbReference type="SMR" id="Q9HLI6"/>
<dbReference type="STRING" id="273075.gene:9571459"/>
<dbReference type="PaxDb" id="273075-Ta0242"/>
<dbReference type="EnsemblBacteria" id="CAC11387">
    <property type="protein sequence ID" value="CAC11387"/>
    <property type="gene ID" value="CAC11387"/>
</dbReference>
<dbReference type="KEGG" id="tac:Ta0242"/>
<dbReference type="eggNOG" id="arCOG04671">
    <property type="taxonomic scope" value="Archaea"/>
</dbReference>
<dbReference type="HOGENOM" id="CLU_014801_4_0_2"/>
<dbReference type="InParanoid" id="Q9HLI6"/>
<dbReference type="OrthoDB" id="27422at2157"/>
<dbReference type="UniPathway" id="UPA00379">
    <property type="reaction ID" value="UER00549"/>
</dbReference>
<dbReference type="Proteomes" id="UP000001024">
    <property type="component" value="Chromosome"/>
</dbReference>
<dbReference type="GO" id="GO:0005737">
    <property type="term" value="C:cytoplasm"/>
    <property type="evidence" value="ECO:0007669"/>
    <property type="project" value="UniProtKB-SubCell"/>
</dbReference>
<dbReference type="GO" id="GO:0004397">
    <property type="term" value="F:histidine ammonia-lyase activity"/>
    <property type="evidence" value="ECO:0007669"/>
    <property type="project" value="UniProtKB-UniRule"/>
</dbReference>
<dbReference type="GO" id="GO:0019556">
    <property type="term" value="P:L-histidine catabolic process to glutamate and formamide"/>
    <property type="evidence" value="ECO:0007669"/>
    <property type="project" value="UniProtKB-UniPathway"/>
</dbReference>
<dbReference type="GO" id="GO:0019557">
    <property type="term" value="P:L-histidine catabolic process to glutamate and formate"/>
    <property type="evidence" value="ECO:0007669"/>
    <property type="project" value="UniProtKB-UniPathway"/>
</dbReference>
<dbReference type="CDD" id="cd00332">
    <property type="entry name" value="PAL-HAL"/>
    <property type="match status" value="1"/>
</dbReference>
<dbReference type="FunFam" id="1.10.275.10:FF:000005">
    <property type="entry name" value="Histidine ammonia-lyase"/>
    <property type="match status" value="1"/>
</dbReference>
<dbReference type="Gene3D" id="1.20.200.10">
    <property type="entry name" value="Fumarase/aspartase (Central domain)"/>
    <property type="match status" value="1"/>
</dbReference>
<dbReference type="Gene3D" id="1.10.275.10">
    <property type="entry name" value="Fumarase/aspartase (N-terminal domain)"/>
    <property type="match status" value="1"/>
</dbReference>
<dbReference type="HAMAP" id="MF_00229">
    <property type="entry name" value="His_ammonia_lyase"/>
    <property type="match status" value="1"/>
</dbReference>
<dbReference type="InterPro" id="IPR001106">
    <property type="entry name" value="Aromatic_Lyase"/>
</dbReference>
<dbReference type="InterPro" id="IPR024083">
    <property type="entry name" value="Fumarase/histidase_N"/>
</dbReference>
<dbReference type="InterPro" id="IPR005921">
    <property type="entry name" value="HutH"/>
</dbReference>
<dbReference type="InterPro" id="IPR008948">
    <property type="entry name" value="L-Aspartase-like"/>
</dbReference>
<dbReference type="InterPro" id="IPR022313">
    <property type="entry name" value="Phe/His_NH3-lyase_AS"/>
</dbReference>
<dbReference type="NCBIfam" id="TIGR01225">
    <property type="entry name" value="hutH"/>
    <property type="match status" value="1"/>
</dbReference>
<dbReference type="NCBIfam" id="NF006871">
    <property type="entry name" value="PRK09367.1"/>
    <property type="match status" value="1"/>
</dbReference>
<dbReference type="PANTHER" id="PTHR10362">
    <property type="entry name" value="HISTIDINE AMMONIA-LYASE"/>
    <property type="match status" value="1"/>
</dbReference>
<dbReference type="Pfam" id="PF00221">
    <property type="entry name" value="Lyase_aromatic"/>
    <property type="match status" value="1"/>
</dbReference>
<dbReference type="SUPFAM" id="SSF48557">
    <property type="entry name" value="L-aspartase-like"/>
    <property type="match status" value="1"/>
</dbReference>
<dbReference type="PROSITE" id="PS00488">
    <property type="entry name" value="PAL_HISTIDASE"/>
    <property type="match status" value="1"/>
</dbReference>